<organism>
    <name type="scientific">Mus musculus</name>
    <name type="common">Mouse</name>
    <dbReference type="NCBI Taxonomy" id="10090"/>
    <lineage>
        <taxon>Eukaryota</taxon>
        <taxon>Metazoa</taxon>
        <taxon>Chordata</taxon>
        <taxon>Craniata</taxon>
        <taxon>Vertebrata</taxon>
        <taxon>Euteleostomi</taxon>
        <taxon>Mammalia</taxon>
        <taxon>Eutheria</taxon>
        <taxon>Euarchontoglires</taxon>
        <taxon>Glires</taxon>
        <taxon>Rodentia</taxon>
        <taxon>Myomorpha</taxon>
        <taxon>Muroidea</taxon>
        <taxon>Muridae</taxon>
        <taxon>Murinae</taxon>
        <taxon>Mus</taxon>
        <taxon>Mus</taxon>
    </lineage>
</organism>
<proteinExistence type="evidence at protein level"/>
<dbReference type="EC" id="2.7.11.1" evidence="3"/>
<dbReference type="EMBL" id="AF082077">
    <property type="protein sequence ID" value="AAC32375.1"/>
    <property type="molecule type" value="mRNA"/>
</dbReference>
<dbReference type="BMRB" id="O88643"/>
<dbReference type="SMR" id="O88643"/>
<dbReference type="CORUM" id="O88643"/>
<dbReference type="DIP" id="DIP-32847N"/>
<dbReference type="FunCoup" id="O88643">
    <property type="interactions" value="948"/>
</dbReference>
<dbReference type="IntAct" id="O88643">
    <property type="interactions" value="17"/>
</dbReference>
<dbReference type="MINT" id="O88643"/>
<dbReference type="STRING" id="10090.ENSMUSP00000033040"/>
<dbReference type="BindingDB" id="O88643"/>
<dbReference type="ChEMBL" id="CHEMBL4295682"/>
<dbReference type="GlyGen" id="O88643">
    <property type="glycosylation" value="2 sites, 1 N-linked glycan (1 site)"/>
</dbReference>
<dbReference type="iPTMnet" id="O88643"/>
<dbReference type="PhosphoSitePlus" id="O88643"/>
<dbReference type="SwissPalm" id="O88643"/>
<dbReference type="jPOST" id="O88643"/>
<dbReference type="PaxDb" id="10090-ENSMUSP00000033040"/>
<dbReference type="PeptideAtlas" id="O88643"/>
<dbReference type="ProteomicsDB" id="293997"/>
<dbReference type="Pumba" id="O88643"/>
<dbReference type="AGR" id="MGI:1339975"/>
<dbReference type="MGI" id="MGI:1339975">
    <property type="gene designation" value="Pak1"/>
</dbReference>
<dbReference type="eggNOG" id="KOG0578">
    <property type="taxonomic scope" value="Eukaryota"/>
</dbReference>
<dbReference type="InParanoid" id="O88643"/>
<dbReference type="PhylomeDB" id="O88643"/>
<dbReference type="BRENDA" id="2.7.11.1">
    <property type="organism ID" value="3474"/>
</dbReference>
<dbReference type="Reactome" id="R-MMU-202433">
    <property type="pathway name" value="Generation of second messenger molecules"/>
</dbReference>
<dbReference type="Reactome" id="R-MMU-2029482">
    <property type="pathway name" value="Regulation of actin dynamics for phagocytic cup formation"/>
</dbReference>
<dbReference type="Reactome" id="R-MMU-2871796">
    <property type="pathway name" value="FCERI mediated MAPK activation"/>
</dbReference>
<dbReference type="Reactome" id="R-MMU-389359">
    <property type="pathway name" value="CD28 dependent Vav1 pathway"/>
</dbReference>
<dbReference type="Reactome" id="R-MMU-3928662">
    <property type="pathway name" value="EPHB-mediated forward signaling"/>
</dbReference>
<dbReference type="Reactome" id="R-MMU-3928664">
    <property type="pathway name" value="Ephrin signaling"/>
</dbReference>
<dbReference type="Reactome" id="R-MMU-399954">
    <property type="pathway name" value="Sema3A PAK dependent Axon repulsion"/>
</dbReference>
<dbReference type="Reactome" id="R-MMU-445144">
    <property type="pathway name" value="Signal transduction by L1"/>
</dbReference>
<dbReference type="Reactome" id="R-MMU-445355">
    <property type="pathway name" value="Smooth Muscle Contraction"/>
</dbReference>
<dbReference type="Reactome" id="R-MMU-5218920">
    <property type="pathway name" value="VEGFR2 mediated vascular permeability"/>
</dbReference>
<dbReference type="Reactome" id="R-MMU-5621575">
    <property type="pathway name" value="CD209 (DC-SIGN) signaling"/>
</dbReference>
<dbReference type="Reactome" id="R-MMU-5627123">
    <property type="pathway name" value="RHO GTPases activate PAKs"/>
</dbReference>
<dbReference type="Reactome" id="R-MMU-5687128">
    <property type="pathway name" value="MAPK6/MAPK4 signaling"/>
</dbReference>
<dbReference type="Reactome" id="R-MMU-8964616">
    <property type="pathway name" value="G beta:gamma signalling through CDC42"/>
</dbReference>
<dbReference type="Reactome" id="R-MMU-9013149">
    <property type="pathway name" value="RAC1 GTPase cycle"/>
</dbReference>
<dbReference type="Reactome" id="R-MMU-9013404">
    <property type="pathway name" value="RAC2 GTPase cycle"/>
</dbReference>
<dbReference type="Reactome" id="R-MMU-9013406">
    <property type="pathway name" value="RHOQ GTPase cycle"/>
</dbReference>
<dbReference type="Reactome" id="R-MMU-9013407">
    <property type="pathway name" value="RHOH GTPase cycle"/>
</dbReference>
<dbReference type="Reactome" id="R-MMU-9013420">
    <property type="pathway name" value="RHOU GTPase cycle"/>
</dbReference>
<dbReference type="Reactome" id="R-MMU-9013423">
    <property type="pathway name" value="RAC3 GTPase cycle"/>
</dbReference>
<dbReference type="Reactome" id="R-MMU-9013424">
    <property type="pathway name" value="RHOV GTPase cycle"/>
</dbReference>
<dbReference type="CD-CODE" id="CE726F99">
    <property type="entry name" value="Postsynaptic density"/>
</dbReference>
<dbReference type="ChiTaRS" id="Pak1">
    <property type="organism name" value="mouse"/>
</dbReference>
<dbReference type="PRO" id="PR:O88643"/>
<dbReference type="Proteomes" id="UP000000589">
    <property type="component" value="Unplaced"/>
</dbReference>
<dbReference type="RNAct" id="O88643">
    <property type="molecule type" value="protein"/>
</dbReference>
<dbReference type="GO" id="GO:0030424">
    <property type="term" value="C:axon"/>
    <property type="evidence" value="ECO:0000314"/>
    <property type="project" value="MGI"/>
</dbReference>
<dbReference type="GO" id="GO:0005911">
    <property type="term" value="C:cell-cell junction"/>
    <property type="evidence" value="ECO:0000250"/>
    <property type="project" value="UniProtKB"/>
</dbReference>
<dbReference type="GO" id="GO:0005813">
    <property type="term" value="C:centrosome"/>
    <property type="evidence" value="ECO:0007669"/>
    <property type="project" value="UniProtKB-SubCell"/>
</dbReference>
<dbReference type="GO" id="GO:0005694">
    <property type="term" value="C:chromosome"/>
    <property type="evidence" value="ECO:0007669"/>
    <property type="project" value="UniProtKB-SubCell"/>
</dbReference>
<dbReference type="GO" id="GO:0005737">
    <property type="term" value="C:cytoplasm"/>
    <property type="evidence" value="ECO:0000314"/>
    <property type="project" value="MGI"/>
</dbReference>
<dbReference type="GO" id="GO:0030425">
    <property type="term" value="C:dendrite"/>
    <property type="evidence" value="ECO:0000314"/>
    <property type="project" value="MGI"/>
</dbReference>
<dbReference type="GO" id="GO:0005925">
    <property type="term" value="C:focal adhesion"/>
    <property type="evidence" value="ECO:0000304"/>
    <property type="project" value="MGI"/>
</dbReference>
<dbReference type="GO" id="GO:0098982">
    <property type="term" value="C:GABA-ergic synapse"/>
    <property type="evidence" value="ECO:0000314"/>
    <property type="project" value="SynGO"/>
</dbReference>
<dbReference type="GO" id="GO:0098978">
    <property type="term" value="C:glutamatergic synapse"/>
    <property type="evidence" value="ECO:0000314"/>
    <property type="project" value="SynGO"/>
</dbReference>
<dbReference type="GO" id="GO:0030426">
    <property type="term" value="C:growth cone"/>
    <property type="evidence" value="ECO:0000314"/>
    <property type="project" value="MGI"/>
</dbReference>
<dbReference type="GO" id="GO:0030027">
    <property type="term" value="C:lamellipodium"/>
    <property type="evidence" value="ECO:0007669"/>
    <property type="project" value="UniProtKB-SubCell"/>
</dbReference>
<dbReference type="GO" id="GO:0005654">
    <property type="term" value="C:nucleoplasm"/>
    <property type="evidence" value="ECO:0000250"/>
    <property type="project" value="UniProtKB"/>
</dbReference>
<dbReference type="GO" id="GO:0005634">
    <property type="term" value="C:nucleus"/>
    <property type="evidence" value="ECO:0000314"/>
    <property type="project" value="MGI"/>
</dbReference>
<dbReference type="GO" id="GO:0005886">
    <property type="term" value="C:plasma membrane"/>
    <property type="evidence" value="ECO:0000250"/>
    <property type="project" value="UniProtKB"/>
</dbReference>
<dbReference type="GO" id="GO:0014069">
    <property type="term" value="C:postsynaptic density"/>
    <property type="evidence" value="ECO:0000314"/>
    <property type="project" value="MGI"/>
</dbReference>
<dbReference type="GO" id="GO:0098793">
    <property type="term" value="C:presynapse"/>
    <property type="evidence" value="ECO:0007669"/>
    <property type="project" value="GOC"/>
</dbReference>
<dbReference type="GO" id="GO:0001726">
    <property type="term" value="C:ruffle"/>
    <property type="evidence" value="ECO:0000250"/>
    <property type="project" value="UniProtKB"/>
</dbReference>
<dbReference type="GO" id="GO:0032587">
    <property type="term" value="C:ruffle membrane"/>
    <property type="evidence" value="ECO:0007669"/>
    <property type="project" value="UniProtKB-SubCell"/>
</dbReference>
<dbReference type="GO" id="GO:0005524">
    <property type="term" value="F:ATP binding"/>
    <property type="evidence" value="ECO:0007669"/>
    <property type="project" value="UniProtKB-KW"/>
</dbReference>
<dbReference type="GO" id="GO:0005518">
    <property type="term" value="F:collagen binding"/>
    <property type="evidence" value="ECO:0000250"/>
    <property type="project" value="UniProtKB"/>
</dbReference>
<dbReference type="GO" id="GO:0043015">
    <property type="term" value="F:gamma-tubulin binding"/>
    <property type="evidence" value="ECO:0000250"/>
    <property type="project" value="UniProtKB"/>
</dbReference>
<dbReference type="GO" id="GO:0004672">
    <property type="term" value="F:protein kinase activity"/>
    <property type="evidence" value="ECO:0000314"/>
    <property type="project" value="MGI"/>
</dbReference>
<dbReference type="GO" id="GO:0106310">
    <property type="term" value="F:protein serine kinase activity"/>
    <property type="evidence" value="ECO:0007669"/>
    <property type="project" value="RHEA"/>
</dbReference>
<dbReference type="GO" id="GO:0004674">
    <property type="term" value="F:protein serine/threonine kinase activity"/>
    <property type="evidence" value="ECO:0000314"/>
    <property type="project" value="MGI"/>
</dbReference>
<dbReference type="GO" id="GO:0030036">
    <property type="term" value="P:actin cytoskeleton organization"/>
    <property type="evidence" value="ECO:0000250"/>
    <property type="project" value="UniProtKB"/>
</dbReference>
<dbReference type="GO" id="GO:0021764">
    <property type="term" value="P:amygdala development"/>
    <property type="evidence" value="ECO:0000316"/>
    <property type="project" value="MGI"/>
</dbReference>
<dbReference type="GO" id="GO:0006915">
    <property type="term" value="P:apoptotic process"/>
    <property type="evidence" value="ECO:0007669"/>
    <property type="project" value="UniProtKB-KW"/>
</dbReference>
<dbReference type="GO" id="GO:0048754">
    <property type="term" value="P:branching morphogenesis of an epithelial tube"/>
    <property type="evidence" value="ECO:0000250"/>
    <property type="project" value="UniProtKB"/>
</dbReference>
<dbReference type="GO" id="GO:0016477">
    <property type="term" value="P:cell migration"/>
    <property type="evidence" value="ECO:0000266"/>
    <property type="project" value="MGI"/>
</dbReference>
<dbReference type="GO" id="GO:0006338">
    <property type="term" value="P:chromatin remodeling"/>
    <property type="evidence" value="ECO:0000250"/>
    <property type="project" value="UniProtKB"/>
</dbReference>
<dbReference type="GO" id="GO:0016358">
    <property type="term" value="P:dendrite development"/>
    <property type="evidence" value="ECO:0000314"/>
    <property type="project" value="MGI"/>
</dbReference>
<dbReference type="GO" id="GO:0060996">
    <property type="term" value="P:dendritic spine development"/>
    <property type="evidence" value="ECO:0000316"/>
    <property type="project" value="MGI"/>
</dbReference>
<dbReference type="GO" id="GO:0006974">
    <property type="term" value="P:DNA damage response"/>
    <property type="evidence" value="ECO:0000250"/>
    <property type="project" value="UniProtKB"/>
</dbReference>
<dbReference type="GO" id="GO:0006887">
    <property type="term" value="P:exocytosis"/>
    <property type="evidence" value="ECO:0007669"/>
    <property type="project" value="UniProtKB-KW"/>
</dbReference>
<dbReference type="GO" id="GO:0061534">
    <property type="term" value="P:gamma-aminobutyric acid secretion, neurotransmission"/>
    <property type="evidence" value="ECO:0000316"/>
    <property type="project" value="MGI"/>
</dbReference>
<dbReference type="GO" id="GO:0061535">
    <property type="term" value="P:glutamate secretion, neurotransmission"/>
    <property type="evidence" value="ECO:0000316"/>
    <property type="project" value="MGI"/>
</dbReference>
<dbReference type="GO" id="GO:0060244">
    <property type="term" value="P:negative regulation of cell proliferation involved in contact inhibition"/>
    <property type="evidence" value="ECO:0000250"/>
    <property type="project" value="UniProtKB"/>
</dbReference>
<dbReference type="GO" id="GO:0007528">
    <property type="term" value="P:neuromuscular junction development"/>
    <property type="evidence" value="ECO:0000316"/>
    <property type="project" value="MGI"/>
</dbReference>
<dbReference type="GO" id="GO:0098597">
    <property type="term" value="P:observational learning"/>
    <property type="evidence" value="ECO:0000316"/>
    <property type="project" value="MGI"/>
</dbReference>
<dbReference type="GO" id="GO:0030335">
    <property type="term" value="P:positive regulation of cell migration"/>
    <property type="evidence" value="ECO:0000250"/>
    <property type="project" value="UniProtKB"/>
</dbReference>
<dbReference type="GO" id="GO:0033148">
    <property type="term" value="P:positive regulation of intracellular estrogen receptor signaling pathway"/>
    <property type="evidence" value="ECO:0000250"/>
    <property type="project" value="UniProtKB"/>
</dbReference>
<dbReference type="GO" id="GO:0090063">
    <property type="term" value="P:positive regulation of microtubule nucleation"/>
    <property type="evidence" value="ECO:0000250"/>
    <property type="project" value="UniProtKB"/>
</dbReference>
<dbReference type="GO" id="GO:0051496">
    <property type="term" value="P:positive regulation of stress fiber assembly"/>
    <property type="evidence" value="ECO:0000250"/>
    <property type="project" value="UniProtKB"/>
</dbReference>
<dbReference type="GO" id="GO:1903608">
    <property type="term" value="P:protein localization to cytoplasmic stress granule"/>
    <property type="evidence" value="ECO:0000250"/>
    <property type="project" value="UniProtKB"/>
</dbReference>
<dbReference type="GO" id="GO:0043113">
    <property type="term" value="P:receptor clustering"/>
    <property type="evidence" value="ECO:0000316"/>
    <property type="project" value="MGI"/>
</dbReference>
<dbReference type="GO" id="GO:0010468">
    <property type="term" value="P:regulation of gene expression"/>
    <property type="evidence" value="ECO:0000316"/>
    <property type="project" value="MGI"/>
</dbReference>
<dbReference type="GO" id="GO:1900271">
    <property type="term" value="P:regulation of long-term synaptic potentiation"/>
    <property type="evidence" value="ECO:0000316"/>
    <property type="project" value="MGI"/>
</dbReference>
<dbReference type="GO" id="GO:0043408">
    <property type="term" value="P:regulation of MAPK cascade"/>
    <property type="evidence" value="ECO:0000316"/>
    <property type="project" value="MGI"/>
</dbReference>
<dbReference type="GO" id="GO:0150036">
    <property type="term" value="P:regulation of trans-synaptic signaling by endocannabinoid, modulating synaptic transmission"/>
    <property type="evidence" value="ECO:0000314"/>
    <property type="project" value="SynGO"/>
</dbReference>
<dbReference type="GO" id="GO:0019226">
    <property type="term" value="P:transmission of nerve impulse"/>
    <property type="evidence" value="ECO:0000316"/>
    <property type="project" value="MGI"/>
</dbReference>
<dbReference type="GO" id="GO:0042060">
    <property type="term" value="P:wound healing"/>
    <property type="evidence" value="ECO:0000250"/>
    <property type="project" value="UniProtKB"/>
</dbReference>
<dbReference type="CDD" id="cd01093">
    <property type="entry name" value="CRIB_PAK_like"/>
    <property type="match status" value="1"/>
</dbReference>
<dbReference type="FunFam" id="1.10.510.10:FF:000011">
    <property type="entry name" value="Non-specific serine/threonine protein kinase"/>
    <property type="match status" value="1"/>
</dbReference>
<dbReference type="FunFam" id="3.30.200.20:FF:000069">
    <property type="entry name" value="Non-specific serine/threonine protein kinase"/>
    <property type="match status" value="1"/>
</dbReference>
<dbReference type="FunFam" id="3.90.810.10:FF:000001">
    <property type="entry name" value="Non-specific serine/threonine protein kinase"/>
    <property type="match status" value="1"/>
</dbReference>
<dbReference type="Gene3D" id="3.90.810.10">
    <property type="entry name" value="CRIB domain"/>
    <property type="match status" value="1"/>
</dbReference>
<dbReference type="Gene3D" id="3.30.200.20">
    <property type="entry name" value="Phosphorylase Kinase, domain 1"/>
    <property type="match status" value="1"/>
</dbReference>
<dbReference type="Gene3D" id="1.10.510.10">
    <property type="entry name" value="Transferase(Phosphotransferase) domain 1"/>
    <property type="match status" value="1"/>
</dbReference>
<dbReference type="InterPro" id="IPR000095">
    <property type="entry name" value="CRIB_dom"/>
</dbReference>
<dbReference type="InterPro" id="IPR036936">
    <property type="entry name" value="CRIB_dom_sf"/>
</dbReference>
<dbReference type="InterPro" id="IPR011009">
    <property type="entry name" value="Kinase-like_dom_sf"/>
</dbReference>
<dbReference type="InterPro" id="IPR051931">
    <property type="entry name" value="PAK3-like"/>
</dbReference>
<dbReference type="InterPro" id="IPR033923">
    <property type="entry name" value="PAK_BD"/>
</dbReference>
<dbReference type="InterPro" id="IPR000719">
    <property type="entry name" value="Prot_kinase_dom"/>
</dbReference>
<dbReference type="InterPro" id="IPR017441">
    <property type="entry name" value="Protein_kinase_ATP_BS"/>
</dbReference>
<dbReference type="InterPro" id="IPR008271">
    <property type="entry name" value="Ser/Thr_kinase_AS"/>
</dbReference>
<dbReference type="PANTHER" id="PTHR45832:SF10">
    <property type="entry name" value="NON-SPECIFIC SERINE_THREONINE PROTEIN KINASE"/>
    <property type="match status" value="1"/>
</dbReference>
<dbReference type="PANTHER" id="PTHR45832">
    <property type="entry name" value="SERINE/THREONINE-PROTEIN KINASE SAMKA-RELATED-RELATED"/>
    <property type="match status" value="1"/>
</dbReference>
<dbReference type="Pfam" id="PF00786">
    <property type="entry name" value="PBD"/>
    <property type="match status" value="1"/>
</dbReference>
<dbReference type="Pfam" id="PF00069">
    <property type="entry name" value="Pkinase"/>
    <property type="match status" value="1"/>
</dbReference>
<dbReference type="SMART" id="SM00285">
    <property type="entry name" value="PBD"/>
    <property type="match status" value="1"/>
</dbReference>
<dbReference type="SMART" id="SM00220">
    <property type="entry name" value="S_TKc"/>
    <property type="match status" value="1"/>
</dbReference>
<dbReference type="SUPFAM" id="SSF56112">
    <property type="entry name" value="Protein kinase-like (PK-like)"/>
    <property type="match status" value="1"/>
</dbReference>
<dbReference type="PROSITE" id="PS50108">
    <property type="entry name" value="CRIB"/>
    <property type="match status" value="1"/>
</dbReference>
<dbReference type="PROSITE" id="PS00107">
    <property type="entry name" value="PROTEIN_KINASE_ATP"/>
    <property type="match status" value="1"/>
</dbReference>
<dbReference type="PROSITE" id="PS50011">
    <property type="entry name" value="PROTEIN_KINASE_DOM"/>
    <property type="match status" value="1"/>
</dbReference>
<dbReference type="PROSITE" id="PS00108">
    <property type="entry name" value="PROTEIN_KINASE_ST"/>
    <property type="match status" value="1"/>
</dbReference>
<keyword id="KW-0007">Acetylation</keyword>
<keyword id="KW-0021">Allosteric enzyme</keyword>
<keyword id="KW-0053">Apoptosis</keyword>
<keyword id="KW-0067">ATP-binding</keyword>
<keyword id="KW-0965">Cell junction</keyword>
<keyword id="KW-1003">Cell membrane</keyword>
<keyword id="KW-0966">Cell projection</keyword>
<keyword id="KW-0158">Chromosome</keyword>
<keyword id="KW-0963">Cytoplasm</keyword>
<keyword id="KW-0206">Cytoskeleton</keyword>
<keyword id="KW-0903">Direct protein sequencing</keyword>
<keyword id="KW-0268">Exocytosis</keyword>
<keyword id="KW-0418">Kinase</keyword>
<keyword id="KW-0472">Membrane</keyword>
<keyword id="KW-0547">Nucleotide-binding</keyword>
<keyword id="KW-0539">Nucleus</keyword>
<keyword id="KW-0597">Phosphoprotein</keyword>
<keyword id="KW-1185">Reference proteome</keyword>
<keyword id="KW-0723">Serine/threonine-protein kinase</keyword>
<keyword id="KW-0808">Transferase</keyword>
<gene>
    <name evidence="21" type="primary">Pak1</name>
    <name type="synonym">Paka</name>
</gene>
<evidence type="ECO:0000250" key="1"/>
<evidence type="ECO:0000250" key="2">
    <source>
        <dbReference type="UniProtKB" id="P35465"/>
    </source>
</evidence>
<evidence type="ECO:0000250" key="3">
    <source>
        <dbReference type="UniProtKB" id="Q13153"/>
    </source>
</evidence>
<evidence type="ECO:0000255" key="4">
    <source>
        <dbReference type="PROSITE-ProRule" id="PRU00057"/>
    </source>
</evidence>
<evidence type="ECO:0000255" key="5">
    <source>
        <dbReference type="PROSITE-ProRule" id="PRU00159"/>
    </source>
</evidence>
<evidence type="ECO:0000255" key="6">
    <source>
        <dbReference type="PROSITE-ProRule" id="PRU10027"/>
    </source>
</evidence>
<evidence type="ECO:0000256" key="7">
    <source>
        <dbReference type="SAM" id="MobiDB-lite"/>
    </source>
</evidence>
<evidence type="ECO:0000269" key="8">
    <source>
    </source>
</evidence>
<evidence type="ECO:0000269" key="9">
    <source>
    </source>
</evidence>
<evidence type="ECO:0000269" key="10">
    <source>
    </source>
</evidence>
<evidence type="ECO:0000269" key="11">
    <source>
    </source>
</evidence>
<evidence type="ECO:0000269" key="12">
    <source>
    </source>
</evidence>
<evidence type="ECO:0000269" key="13">
    <source>
    </source>
</evidence>
<evidence type="ECO:0000269" key="14">
    <source>
    </source>
</evidence>
<evidence type="ECO:0000269" key="15">
    <source>
    </source>
</evidence>
<evidence type="ECO:0000269" key="16">
    <source>
    </source>
</evidence>
<evidence type="ECO:0000269" key="17">
    <source>
    </source>
</evidence>
<evidence type="ECO:0000305" key="18"/>
<evidence type="ECO:0000305" key="19">
    <source>
    </source>
</evidence>
<evidence type="ECO:0000305" key="20">
    <source>
    </source>
</evidence>
<evidence type="ECO:0000312" key="21">
    <source>
        <dbReference type="MGI" id="MGI:1339975"/>
    </source>
</evidence>
<evidence type="ECO:0007744" key="22">
    <source>
    </source>
</evidence>
<comment type="function">
    <text evidence="2 3 8 9 10 12 14 17">Protein kinase involved in intracellular signaling pathways downstream of integrins and receptor-type kinases that plays an important role in cytoskeleton dynamics, in cell adhesion, migration, proliferation, apoptosis, mitosis, and in vesicle-mediated transport processes (PubMed:10611223, PubMed:12165471, PubMed:12176334, PubMed:15800193, PubMed:22669945, PubMed:23633677). Can directly phosphorylate BAD and protects cells against apoptosis (PubMed:10611223). Activated by interaction with CDC42 and RAC1 (By similarity). Functions as a GTPase effector that links the Rho-related GTPases CDC42 and RAC1 to the JNK MAP kinase pathway (By similarity). Phosphorylates and activates MAP2K1, and thereby mediates activation of downstream MAP kinases (By similarity). Involved in the reorganization of the actin cytoskeleton, actin stress fibers and of focal adhesion complexes (By similarity). Phosphorylates the tubulin chaperone TBCB and thereby plays a role in the regulation of microtubule biogenesis and organization of the tubulin cytoskeleton (PubMed:12176334). Plays a role in the regulation of insulin secretion in response to elevated glucose levels (PubMed:22669945). Part of a ternary complex that contains PAK1, DVL1 and MUSK that is important for MUSK-dependent regulation of AChR clustering during the formation of the neuromuscular junction (NMJ) (PubMed:12165471). Activity is inhibited in cells undergoing apoptosis, potentially due to binding of CDC2L1 and CDC2L2 (By similarity). Phosphorylates MYL9/MLC2 (By similarity). Phosphorylates RAF1 at 'Ser-338' and 'Ser-339' resulting in: activation of RAF1, stimulation of RAF1 translocation to mitochondria, phosphorylation of BAD by RAF1, and RAF1 binding to BCL2 (By similarity). Phosphorylates SNAI1 at 'Ser-246' promoting its transcriptional repressor activity by increasing its accumulation in the nucleus (By similarity). In podocytes, promotes NR3C2 nuclear localization (By similarity). Required for atypical chemokine receptor ACKR2-induced phosphorylation of LIMK1 and cofilin (CFL1) and for the up-regulation of ACKR2 from endosomal compartment to cell membrane, increasing its efficiency in chemokine uptake and degradation (PubMed:23633677). In synapses, seems to mediate the regulation of F-actin cluster formation performed by SHANK3, maybe through CFL1 phosphorylation and inactivation (By similarity). Plays a role in RUFY3-mediated facilitating gastric cancer cells migration and invasion (By similarity). In response to DNA damage, phosphorylates MORC2 which activates its ATPase activity and facilitates chromatin remodeling (By similarity). In neurons, plays a crucial role in regulating GABA(A) receptor synaptic stability and hence GABAergic inhibitory synaptic transmission through its role in F-actin stabilization (By similarity). In hippocampal neurons, necessary for the formation of dendritic spines and excitatory synapses; this function is dependent on kinase activity and may be exerted by the regulation of actomyosin contractility through the phosphorylation of myosin II regulatory light chain (MLC) (PubMed:15800193). Along with GIT1, positively regulates microtubule nucleation during interphase (By similarity). Phosphorylates FXR1, promoting its localization to stress granules and activity (By similarity). Phosphorylates ILK on 'Thr-173' and 'Ser-246', promoting nuclear export of ILK (By similarity).</text>
</comment>
<comment type="catalytic activity">
    <reaction evidence="3">
        <text>L-seryl-[protein] + ATP = O-phospho-L-seryl-[protein] + ADP + H(+)</text>
        <dbReference type="Rhea" id="RHEA:17989"/>
        <dbReference type="Rhea" id="RHEA-COMP:9863"/>
        <dbReference type="Rhea" id="RHEA-COMP:11604"/>
        <dbReference type="ChEBI" id="CHEBI:15378"/>
        <dbReference type="ChEBI" id="CHEBI:29999"/>
        <dbReference type="ChEBI" id="CHEBI:30616"/>
        <dbReference type="ChEBI" id="CHEBI:83421"/>
        <dbReference type="ChEBI" id="CHEBI:456216"/>
        <dbReference type="EC" id="2.7.11.1"/>
    </reaction>
</comment>
<comment type="catalytic activity">
    <reaction evidence="3">
        <text>L-threonyl-[protein] + ATP = O-phospho-L-threonyl-[protein] + ADP + H(+)</text>
        <dbReference type="Rhea" id="RHEA:46608"/>
        <dbReference type="Rhea" id="RHEA-COMP:11060"/>
        <dbReference type="Rhea" id="RHEA-COMP:11605"/>
        <dbReference type="ChEBI" id="CHEBI:15378"/>
        <dbReference type="ChEBI" id="CHEBI:30013"/>
        <dbReference type="ChEBI" id="CHEBI:30616"/>
        <dbReference type="ChEBI" id="CHEBI:61977"/>
        <dbReference type="ChEBI" id="CHEBI:456216"/>
        <dbReference type="EC" id="2.7.11.1"/>
    </reaction>
</comment>
<comment type="cofactor">
    <cofactor evidence="3">
        <name>Mg(2+)</name>
        <dbReference type="ChEBI" id="CHEBI:18420"/>
    </cofactor>
</comment>
<comment type="activity regulation">
    <text evidence="1">Phosphorylation of Thr-84 by OXSR1 inhibits activation (By similarity). Activated by binding small G proteins. Binding of GTP-bound CDC42 or RAC1 to the autoregulatory region releases monomers from the autoinhibited dimer, and enables activation by phosphorylation of Thr-423 (By similarity).</text>
</comment>
<comment type="subunit">
    <text evidence="2 3 11 13 16">Homodimer in its autoinhibited state. Active as monomer. Interacts with GIT1 (By similarity). Component of cytoplasmic complexes, which also contains PXN, ARHGEF7 and GIT1. Interacts with NISCH (PubMed:15229651). Interacts with DVL1; mediates the formation of a DVL1, MUSK and PAK1 ternary complex involved in AChR clustering (By similarity). Binds to the caspase-cleaved p110 isoform of CDC2L1 and CDC2L2, p110C, but not the full-length proteins (By similarity). Interacts with ARHGEF7 (By similarity). Interacts tightly with GTP-bound but not GDP-bound CDC42/P21 and RAC1. Interacts with SCRIB (PubMed:18716323). Interacts with PDPK1 (By similarity). Interacts (via kinase domain) with RAF1 (By similarity). Interacts with NCK1 and NCK2 (By similarity). Interacts with TBCB (By similarity). Interacts with BRSK2 (PubMed:22669945). Interacts with SNAI1 (By similarity). Interacts with CIB1 (via N-terminal region); the interaction is direct, promotes PAK1 activity and occurs in a calcium-dependent manner (By similarity). Interacts with INPP5K (PubMed:22751929). Interacts with gamma-tubulin (By similarity). Interacts with RHOU; the interaction promotes PAK1 activation (By similarity).</text>
</comment>
<comment type="interaction">
    <interactant intactId="EBI-457240">
        <id>O88643</id>
    </interactant>
    <interactant intactId="EBI-81763">
        <id>P60766</id>
        <label>Cdc42</label>
    </interactant>
    <organismsDiffer>false</organismsDiffer>
    <experiments>2</experiments>
</comment>
<comment type="subcellular location">
    <subcellularLocation>
        <location evidence="3">Cytoplasm</location>
    </subcellularLocation>
    <subcellularLocation>
        <location evidence="3">Cell junction</location>
        <location evidence="3">Focal adhesion</location>
    </subcellularLocation>
    <subcellularLocation>
        <location evidence="3">Cell projection</location>
        <location evidence="3">Lamellipodium</location>
    </subcellularLocation>
    <subcellularLocation>
        <location evidence="3">Cell membrane</location>
    </subcellularLocation>
    <subcellularLocation>
        <location evidence="3">Cell projection</location>
        <location evidence="3">Ruffle membrane</location>
    </subcellularLocation>
    <subcellularLocation>
        <location evidence="3">Cell projection</location>
        <location evidence="3">Invadopodium</location>
    </subcellularLocation>
    <subcellularLocation>
        <location evidence="3">Nucleus</location>
        <location evidence="3">Nucleoplasm</location>
    </subcellularLocation>
    <subcellularLocation>
        <location evidence="3">Chromosome</location>
    </subcellularLocation>
    <subcellularLocation>
        <location evidence="3">Cytoplasm</location>
        <location evidence="3">Cytoskeleton</location>
        <location evidence="3">Microtubule organizing center</location>
        <location evidence="3">Centrosome</location>
    </subcellularLocation>
    <text evidence="2 3">Recruited to the cell membrane by interaction with CDC42 and RAC1 (By similarity). Recruited to focal adhesions upon activation. Colocalized with CIB1 within membrane ruffles during cell spreading upon readhesion to fibronectin. Colocalizes with RUFY3, F-actin and other core migration components in invadopodia at the cell periphery (By similarity). Upon DNA damage, translocates to the nucleoplasm when phosphorylated at Thr-212 where is co-recruited with MORC2 on damaged chromatin (By similarity). Localization to the centrosome does not depend upon the presence of gamma-tubulin (By similarity). Localization of the active, but not inactive, protein to the adhesions and edge of lamellipodia is mediated by interaction with GIT1 (By similarity).</text>
</comment>
<comment type="PTM">
    <text evidence="2 3 15">Autophosphorylated in trans, meaning that in a dimer, one kinase molecule phosphorylates the other one. Activated by autophosphorylation at Thr-423 in response to a conformation change, triggered by interaction with GTP-bound CDC42 or RAC1. Activated by phosphorylation at Thr-423 by BRSK2 and by PDPK1. Phosphorylated by JAK2 in response to PRL; this increases PAK1 kinase activity. Phosphorylated at Ser-21 by PKB/AKT; this reduces interaction with NCK1 and association with focal adhesion sites (By similarity). Upon DNA damage, phosphorylated at Thr-212 and translocates to the nucleoplasm (By similarity). Phosphorylated at tyrosine residues, which can be enhanced by NTN1 (PubMed:22685302).</text>
</comment>
<comment type="similarity">
    <text evidence="18">Belongs to the protein kinase superfamily. STE Ser/Thr protein kinase family. STE20 subfamily.</text>
</comment>
<comment type="caution">
    <text evidence="19 20">The interaction between DSCAM, PAK1 and RAC1 has been described. This article has been withdrawn by the authors.</text>
</comment>
<sequence>MSNNGVDIQDKPPAPPMRNTSTMIGAGSKDTGTLNHGSKPLPPNPEEKKKKDRFYRSILPGDKTNKKREKERPEISLPSDFEHTIHVGFDAVTGEFTGMPEQWARLLQTSNITKSEQKKNPQAVLDVLEFYNSKKTSNSKKYMSFTDKSAEDYNSSNTLNVKTVSETPAVPPVSEDDEDDDDDATPPPVIAPRPEHTKSVYTRSVIEPLPVTPTRDVATSPISPTENNTTPPDALTRNTEKQKKKPKMSDEEILEKLRSIVSVGDPKKKYTPFEKIGQGASGTVYTAMDVATGQEVAIKQMNLQQQPKKELIINEILVMRENKNPNIVNYLDSYLVGDELWVVMEYLAGGSLTDVVTETCMDEGQIAAVCRECLQALEFLHSNQVIHRDIKSDNILLGMDGSVKLTDFGFCAQITPEQSKRSTMVGTPYWMAPEVVTRKAYGPKVDIWSLGIMAIEMIEGEPPYLNENPLRALYLIATNGTPELQNPEKLSAIFRDFLQCCLEMDVEKRGSAKELLQHQFLKIAKPLSSLTPLMHAAKEATKNNH</sequence>
<protein>
    <recommendedName>
        <fullName evidence="18">Serine/threonine-protein kinase PAK 1</fullName>
        <ecNumber evidence="3">2.7.11.1</ecNumber>
    </recommendedName>
    <alternativeName>
        <fullName evidence="3">Alpha-PAK</fullName>
    </alternativeName>
    <alternativeName>
        <fullName>CDC42/RAC effector kinase PAK-A</fullName>
    </alternativeName>
    <alternativeName>
        <fullName evidence="3">p21-activated kinase 1</fullName>
        <shortName>PAK-1</shortName>
    </alternativeName>
    <alternativeName>
        <fullName evidence="2">p65-PAK</fullName>
    </alternativeName>
</protein>
<reference key="1">
    <citation type="journal article" date="1999" name="Gene">
        <title>Cloning, central nervous system expression and chromosomal mapping of the mouse PAK-1 and PAK-3 genes.</title>
        <authorList>
            <person name="Burbelo P.D."/>
            <person name="Kozak C.A."/>
            <person name="Finegold A.A."/>
            <person name="Hall A."/>
            <person name="Pirone D.M."/>
        </authorList>
    </citation>
    <scope>NUCLEOTIDE SEQUENCE [MRNA]</scope>
</reference>
<reference key="2">
    <citation type="submission" date="2009-01" db="UniProtKB">
        <authorList>
            <person name="Lubec G."/>
            <person name="Sunyer B."/>
            <person name="Chen W.-Q."/>
        </authorList>
    </citation>
    <scope>PROTEIN SEQUENCE OF 204-215; 276-299; 309-320; 372-388 AND 472-489</scope>
    <scope>IDENTIFICATION BY MASS SPECTROMETRY</scope>
    <source>
        <strain>OF1</strain>
        <tissue>Hippocampus</tissue>
    </source>
</reference>
<reference key="3">
    <citation type="journal article" date="2000" name="Mol. Cell. Biol.">
        <title>p21-activated kinase 1 phosphorylates the death agonist bad and protects cells from apoptosis.</title>
        <authorList>
            <person name="Schurmann A."/>
            <person name="Mooney A.F."/>
            <person name="Sanders L.C."/>
            <person name="Sells M.A."/>
            <person name="Wang H.G."/>
            <person name="Reed J.C."/>
            <person name="Bokoch G.M."/>
        </authorList>
    </citation>
    <scope>FUNCTION</scope>
</reference>
<reference key="4">
    <citation type="journal article" date="2002" name="Curr. Biol.">
        <title>Pak1 phosphorylation on T212 affects microtubules in cells undergoing mitosis.</title>
        <authorList>
            <person name="Banerjee M."/>
            <person name="Worth D."/>
            <person name="Prowse D.M."/>
            <person name="Nikolic M."/>
        </authorList>
    </citation>
    <scope>FUNCTION</scope>
    <scope>PHOSPHORYLATION AT THR-212</scope>
</reference>
<reference key="5">
    <citation type="journal article" date="2002" name="Neuron">
        <title>Regulation of AChR clustering by Dishevelled interacting with MuSK and PAK1.</title>
        <authorList>
            <person name="Luo Z.G."/>
            <person name="Wang Q."/>
            <person name="Zhou J.Z."/>
            <person name="Wang J."/>
            <person name="Luo Z."/>
            <person name="Liu M."/>
            <person name="He X."/>
            <person name="Wynshaw-Boris A."/>
            <person name="Xiong W.C."/>
            <person name="Lu B."/>
            <person name="Mei L."/>
        </authorList>
    </citation>
    <scope>FUNCTION IN NEUROMUSCULAR JUNCTION DEVELOPMENT</scope>
    <scope>INTERACTION WITH DVL1 AND MUSK</scope>
</reference>
<reference key="6">
    <citation type="journal article" date="2004" name="EMBO J.">
        <title>The integrin-binding protein Nischarin regulates cell migration by inhibiting PAK.</title>
        <authorList>
            <person name="Alahari S.K."/>
            <person name="Reddig P.J."/>
            <person name="Juliano R.L."/>
        </authorList>
    </citation>
    <scope>INTERACTION WITH NISCH</scope>
</reference>
<reference key="7">
    <citation type="journal article" date="2004" name="J. Biol. Chem.">
        <title>The Down syndrome cell adhesion molecule (DSCAM) interacts with and activates Pak.</title>
        <authorList>
            <person name="Li W."/>
            <person name="Guan K.L."/>
        </authorList>
    </citation>
    <scope>RETRACTED PAPER</scope>
</reference>
<reference key="8">
    <citation type="journal article" date="2015" name="J. Biol. Chem.">
        <title>The Down syndrome cell adhesion molecule (DSCAM) interacts with and activates Pak.</title>
        <authorList>
            <person name="Li W."/>
            <person name="Guan K.L."/>
        </authorList>
    </citation>
    <scope>RETRACTION NOTICE OF PUBMED:15169762</scope>
</reference>
<reference key="9">
    <citation type="journal article" date="2004" name="Mol. Cell. Proteomics">
        <title>Phosphoproteomic analysis of the developing mouse brain.</title>
        <authorList>
            <person name="Ballif B.A."/>
            <person name="Villen J."/>
            <person name="Beausoleil S.A."/>
            <person name="Schwartz D."/>
            <person name="Gygi S.P."/>
        </authorList>
    </citation>
    <scope>IDENTIFICATION BY MASS SPECTROMETRY [LARGE SCALE ANALYSIS]</scope>
    <source>
        <tissue>Embryonic brain</tissue>
    </source>
</reference>
<reference key="10">
    <citation type="journal article" date="2005" name="J. Neurosci.">
        <title>A GIT1/PIX/Rac/PAK signaling module regulates spine morphogenesis and synapse formation through MLC.</title>
        <authorList>
            <person name="Zhang H."/>
            <person name="Webb D.J."/>
            <person name="Asmussen H."/>
            <person name="Niu S."/>
            <person name="Horwitz A.F."/>
        </authorList>
    </citation>
    <scope>FUNCTION</scope>
    <scope>MUTAGENESIS OF HIS-83; HIS-86; LYS-299 AND THR-423</scope>
</reference>
<reference key="11">
    <citation type="journal article" date="2008" name="Hum. Mol. Genet.">
        <title>Scrib regulates PAK activity during the cell migration process.</title>
        <authorList>
            <person name="Nola S."/>
            <person name="Sebbagh M."/>
            <person name="Marchetto S."/>
            <person name="Osmani N."/>
            <person name="Nourry C."/>
            <person name="Audebert S."/>
            <person name="Navarro C."/>
            <person name="Rachel R."/>
            <person name="Montcouquiol M."/>
            <person name="Sans N."/>
            <person name="Etienne-Manneville S."/>
            <person name="Borg J.-P."/>
            <person name="Santoni M.-J."/>
        </authorList>
    </citation>
    <scope>INTERACTION WITH SCRIB</scope>
</reference>
<reference key="12">
    <citation type="journal article" date="2010" name="Cell">
        <title>A tissue-specific atlas of mouse protein phosphorylation and expression.</title>
        <authorList>
            <person name="Huttlin E.L."/>
            <person name="Jedrychowski M.P."/>
            <person name="Elias J.E."/>
            <person name="Goswami T."/>
            <person name="Rad R."/>
            <person name="Beausoleil S.A."/>
            <person name="Villen J."/>
            <person name="Haas W."/>
            <person name="Sowa M.E."/>
            <person name="Gygi S.P."/>
        </authorList>
    </citation>
    <scope>PHOSPHORYLATION [LARGE SCALE ANALYSIS] AT THR-212; SER-220; SER-223; THR-225; THR-229 AND THR-230</scope>
    <scope>IDENTIFICATION BY MASS SPECTROMETRY [LARGE SCALE ANALYSIS]</scope>
    <source>
        <tissue>Brain</tissue>
        <tissue>Brown adipose tissue</tissue>
        <tissue>Testis</tissue>
    </source>
</reference>
<reference key="13">
    <citation type="journal article" date="2012" name="J. Biol. Chem.">
        <title>Synapses of amphids defective (SAD-A) kinase promotes glucose-stimulated insulin secretion through activation of p21-activated kinase (PAK1) in pancreatic beta-Cells.</title>
        <authorList>
            <person name="Nie J."/>
            <person name="Sun C."/>
            <person name="Faruque O."/>
            <person name="Ye G."/>
            <person name="Li J."/>
            <person name="Liang Q."/>
            <person name="Chang Z."/>
            <person name="Yang W."/>
            <person name="Han X."/>
            <person name="Shi Y."/>
        </authorList>
    </citation>
    <scope>FUNCTION</scope>
    <scope>INTERACTION WITH BRSK2</scope>
    <scope>PHOSPHORYLATION AT THR-423</scope>
</reference>
<reference key="14">
    <citation type="journal article" date="2012" name="J. Biol. Chem.">
        <title>Down syndrome cell adhesion molecule (DSCAM) associates with uncoordinated-5C (UNC5C) in netrin-1-mediated growth cone collapse.</title>
        <authorList>
            <person name="Purohit A.A."/>
            <person name="Li W."/>
            <person name="Qu C."/>
            <person name="Dwyer T."/>
            <person name="Shao Q."/>
            <person name="Guan K.L."/>
            <person name="Liu G."/>
        </authorList>
    </citation>
    <scope>PHOSPHORYLATION</scope>
</reference>
<reference key="15">
    <citation type="journal article" date="2012" name="Mol. Cell. Biol.">
        <title>Regulation of insulin signaling by the phosphatidylinositol 3,4,5-triphosphate phosphatase SKIP through the scaffolding function of Pak1.</title>
        <authorList>
            <person name="Ijuin T."/>
            <person name="Takenawa T."/>
        </authorList>
    </citation>
    <scope>INTERACTION WITH INPP5K</scope>
</reference>
<reference key="16">
    <citation type="journal article" date="2013" name="Sci. Signal.">
        <title>Beta-arrestin-dependent activation of the cofilin pathway is required for the scavenging activity of the atypical chemokine receptor D6.</title>
        <authorList>
            <person name="Borroni E.M."/>
            <person name="Cancellieri C."/>
            <person name="Vacchini A."/>
            <person name="Benureau Y."/>
            <person name="Lagane B."/>
            <person name="Bachelerie F."/>
            <person name="Arenzana-Seisdedos F."/>
            <person name="Mizuno K."/>
            <person name="Mantovani A."/>
            <person name="Bonecchi R."/>
            <person name="Locati M."/>
        </authorList>
    </citation>
    <scope>FUNCTION</scope>
    <scope>PHOSPHORYLATION</scope>
</reference>
<accession>O88643</accession>
<name>PAK1_MOUSE</name>
<feature type="initiator methionine" description="Removed" evidence="3">
    <location>
        <position position="1"/>
    </location>
</feature>
<feature type="chain" id="PRO_0000086461" description="Serine/threonine-protein kinase PAK 1">
    <location>
        <begin position="2"/>
        <end position="545"/>
    </location>
</feature>
<feature type="domain" description="CRIB" evidence="4">
    <location>
        <begin position="75"/>
        <end position="88"/>
    </location>
</feature>
<feature type="domain" description="Protein kinase" evidence="5">
    <location>
        <begin position="270"/>
        <end position="521"/>
    </location>
</feature>
<feature type="region of interest" description="Disordered" evidence="7">
    <location>
        <begin position="1"/>
        <end position="75"/>
    </location>
</feature>
<feature type="region of interest" description="Autoregulatory region" evidence="3">
    <location>
        <begin position="70"/>
        <end position="140"/>
    </location>
</feature>
<feature type="region of interest" description="GTPase-binding" evidence="3">
    <location>
        <begin position="75"/>
        <end position="105"/>
    </location>
</feature>
<feature type="region of interest" description="Disordered" evidence="7">
    <location>
        <begin position="150"/>
        <end position="198"/>
    </location>
</feature>
<feature type="region of interest" description="Disordered" evidence="7">
    <location>
        <begin position="210"/>
        <end position="250"/>
    </location>
</feature>
<feature type="compositionally biased region" description="Polar residues" evidence="7">
    <location>
        <begin position="152"/>
        <end position="166"/>
    </location>
</feature>
<feature type="compositionally biased region" description="Acidic residues" evidence="7">
    <location>
        <begin position="174"/>
        <end position="184"/>
    </location>
</feature>
<feature type="compositionally biased region" description="Polar residues" evidence="7">
    <location>
        <begin position="220"/>
        <end position="231"/>
    </location>
</feature>
<feature type="active site" description="Proton acceptor" evidence="5 6">
    <location>
        <position position="389"/>
    </location>
</feature>
<feature type="binding site" evidence="5">
    <location>
        <begin position="276"/>
        <end position="284"/>
    </location>
    <ligand>
        <name>ATP</name>
        <dbReference type="ChEBI" id="CHEBI:30616"/>
    </ligand>
</feature>
<feature type="binding site" evidence="5">
    <location>
        <position position="299"/>
    </location>
    <ligand>
        <name>ATP</name>
        <dbReference type="ChEBI" id="CHEBI:30616"/>
    </ligand>
</feature>
<feature type="modified residue" description="N-acetylserine" evidence="3">
    <location>
        <position position="2"/>
    </location>
</feature>
<feature type="modified residue" description="Phosphoserine; by PKB and autocatalysis" evidence="3">
    <location>
        <position position="21"/>
    </location>
</feature>
<feature type="modified residue" description="Phosphoserine; by autocatalysis" evidence="3">
    <location>
        <position position="57"/>
    </location>
</feature>
<feature type="modified residue" description="Phosphothreonine; by OXSR1" evidence="2">
    <location>
        <position position="84"/>
    </location>
</feature>
<feature type="modified residue" description="Phosphoserine" evidence="3">
    <location>
        <position position="115"/>
    </location>
</feature>
<feature type="modified residue" description="Phosphotyrosine" evidence="3">
    <location>
        <position position="131"/>
    </location>
</feature>
<feature type="modified residue" description="Phosphotyrosine" evidence="3">
    <location>
        <position position="142"/>
    </location>
</feature>
<feature type="modified residue" description="Phosphoserine; by autocatalysis" evidence="2">
    <location>
        <position position="144"/>
    </location>
</feature>
<feature type="modified residue" description="Phosphoserine; by autocatalysis" evidence="2">
    <location>
        <position position="149"/>
    </location>
</feature>
<feature type="modified residue" description="Phosphotyrosine; by JAK2" evidence="3">
    <location>
        <position position="153"/>
    </location>
</feature>
<feature type="modified residue" description="Phosphoserine" evidence="3">
    <location>
        <position position="174"/>
    </location>
</feature>
<feature type="modified residue" description="Phosphothreonine" evidence="3">
    <location>
        <position position="185"/>
    </location>
</feature>
<feature type="modified residue" description="Phosphoserine; by autocatalysis" evidence="2">
    <location>
        <position position="199"/>
    </location>
</feature>
<feature type="modified residue" description="Phosphotyrosine; by JAK2" evidence="3">
    <location>
        <position position="201"/>
    </location>
</feature>
<feature type="modified residue" description="Phosphoserine; by autocatalysis" evidence="2">
    <location>
        <position position="204"/>
    </location>
</feature>
<feature type="modified residue" description="Phosphothreonine" evidence="10 22">
    <location>
        <position position="212"/>
    </location>
</feature>
<feature type="modified residue" description="Phosphothreonine" evidence="3">
    <location>
        <position position="219"/>
    </location>
</feature>
<feature type="modified residue" description="Phosphoserine" evidence="22">
    <location>
        <position position="220"/>
    </location>
</feature>
<feature type="modified residue" description="Phosphoserine" evidence="22">
    <location>
        <position position="223"/>
    </location>
</feature>
<feature type="modified residue" description="Phosphothreonine" evidence="22">
    <location>
        <position position="225"/>
    </location>
</feature>
<feature type="modified residue" description="Phosphothreonine" evidence="22">
    <location>
        <position position="229"/>
    </location>
</feature>
<feature type="modified residue" description="Phosphothreonine" evidence="22">
    <location>
        <position position="230"/>
    </location>
</feature>
<feature type="modified residue" description="Phosphotyrosine; by JAK2" evidence="3">
    <location>
        <position position="285"/>
    </location>
</feature>
<feature type="modified residue" description="Phosphothreonine; by autocatalysis, BRSK2 and PDPK1" evidence="14">
    <location>
        <position position="423"/>
    </location>
</feature>
<feature type="mutagenesis site" description="When expressed in hippocampal neurons, strongly decreases the number of dendritic spines; when associated with L-86 and R-299." evidence="12">
    <original>H</original>
    <variation>L</variation>
    <location>
        <position position="83"/>
    </location>
</feature>
<feature type="mutagenesis site" description="When expressed in hippocampal neurons, strongly decreases the number of dendritic spines; when associated with L-83 and R-299." evidence="12">
    <original>H</original>
    <variation>L</variation>
    <location>
        <position position="86"/>
    </location>
</feature>
<feature type="mutagenesis site" description="When expressed in hippocampal neurons, decreases the number of dendritic spines. Strong decrease in the number of dendritic spines; when associated with L-83 and L-86." evidence="12">
    <original>K</original>
    <variation>R</variation>
    <location>
        <position position="299"/>
    </location>
</feature>
<feature type="mutagenesis site" description="When expressed in hippocampal neurons, increases the density of both spines and dendritic protrusions." evidence="12">
    <original>T</original>
    <variation>E</variation>
    <location>
        <position position="423"/>
    </location>
</feature>